<dbReference type="EC" id="2.1.1.177" evidence="1"/>
<dbReference type="EMBL" id="CP000033">
    <property type="protein sequence ID" value="AAV41986.1"/>
    <property type="molecule type" value="Genomic_DNA"/>
</dbReference>
<dbReference type="RefSeq" id="WP_003548590.1">
    <property type="nucleotide sequence ID" value="NC_006814.3"/>
</dbReference>
<dbReference type="RefSeq" id="YP_193017.1">
    <property type="nucleotide sequence ID" value="NC_006814.3"/>
</dbReference>
<dbReference type="SMR" id="Q5FMT8"/>
<dbReference type="STRING" id="272621.LBA0084"/>
<dbReference type="GeneID" id="93290801"/>
<dbReference type="KEGG" id="lac:LBA0084"/>
<dbReference type="PATRIC" id="fig|272621.13.peg.82"/>
<dbReference type="eggNOG" id="COG1576">
    <property type="taxonomic scope" value="Bacteria"/>
</dbReference>
<dbReference type="HOGENOM" id="CLU_100552_0_0_9"/>
<dbReference type="OrthoDB" id="9806643at2"/>
<dbReference type="BioCyc" id="LACI272621:G1G49-85-MONOMER"/>
<dbReference type="Proteomes" id="UP000006381">
    <property type="component" value="Chromosome"/>
</dbReference>
<dbReference type="GO" id="GO:0005737">
    <property type="term" value="C:cytoplasm"/>
    <property type="evidence" value="ECO:0007669"/>
    <property type="project" value="UniProtKB-SubCell"/>
</dbReference>
<dbReference type="GO" id="GO:0070038">
    <property type="term" value="F:rRNA (pseudouridine-N3-)-methyltransferase activity"/>
    <property type="evidence" value="ECO:0007669"/>
    <property type="project" value="UniProtKB-UniRule"/>
</dbReference>
<dbReference type="CDD" id="cd18081">
    <property type="entry name" value="RlmH-like"/>
    <property type="match status" value="1"/>
</dbReference>
<dbReference type="Gene3D" id="3.40.1280.10">
    <property type="match status" value="1"/>
</dbReference>
<dbReference type="HAMAP" id="MF_00658">
    <property type="entry name" value="23SrRNA_methyltr_H"/>
    <property type="match status" value="1"/>
</dbReference>
<dbReference type="InterPro" id="IPR029028">
    <property type="entry name" value="Alpha/beta_knot_MTases"/>
</dbReference>
<dbReference type="InterPro" id="IPR003742">
    <property type="entry name" value="RlmH-like"/>
</dbReference>
<dbReference type="InterPro" id="IPR029026">
    <property type="entry name" value="tRNA_m1G_MTases_N"/>
</dbReference>
<dbReference type="NCBIfam" id="NF000985">
    <property type="entry name" value="PRK00103.1-3"/>
    <property type="match status" value="1"/>
</dbReference>
<dbReference type="NCBIfam" id="TIGR00246">
    <property type="entry name" value="tRNA_RlmH_YbeA"/>
    <property type="match status" value="1"/>
</dbReference>
<dbReference type="PANTHER" id="PTHR33603">
    <property type="entry name" value="METHYLTRANSFERASE"/>
    <property type="match status" value="1"/>
</dbReference>
<dbReference type="PANTHER" id="PTHR33603:SF1">
    <property type="entry name" value="RIBOSOMAL RNA LARGE SUBUNIT METHYLTRANSFERASE H"/>
    <property type="match status" value="1"/>
</dbReference>
<dbReference type="Pfam" id="PF02590">
    <property type="entry name" value="SPOUT_MTase"/>
    <property type="match status" value="1"/>
</dbReference>
<dbReference type="PIRSF" id="PIRSF004505">
    <property type="entry name" value="MT_bac"/>
    <property type="match status" value="1"/>
</dbReference>
<dbReference type="SUPFAM" id="SSF75217">
    <property type="entry name" value="alpha/beta knot"/>
    <property type="match status" value="1"/>
</dbReference>
<sequence length="159" mass="18109">MNIKIVCVGKLKEKYFKDAIAEYQKRLSRFAKVTIVQVPDEKAPEKFSEAEDEKVKEIEGQRILSKIKDKEYVYVTAIKGKQRSSEEFAKEIQDLGTYGHSDITFVIGGSLGTSDAVNKRADDLISFGKLTMPHQLMRVVLIEQIYRAFMINSGSPYHK</sequence>
<feature type="chain" id="PRO_0000198131" description="Ribosomal RNA large subunit methyltransferase H">
    <location>
        <begin position="1"/>
        <end position="159"/>
    </location>
</feature>
<feature type="binding site" evidence="1">
    <location>
        <position position="108"/>
    </location>
    <ligand>
        <name>S-adenosyl-L-methionine</name>
        <dbReference type="ChEBI" id="CHEBI:59789"/>
    </ligand>
</feature>
<feature type="binding site" evidence="1">
    <location>
        <begin position="127"/>
        <end position="132"/>
    </location>
    <ligand>
        <name>S-adenosyl-L-methionine</name>
        <dbReference type="ChEBI" id="CHEBI:59789"/>
    </ligand>
</feature>
<keyword id="KW-0963">Cytoplasm</keyword>
<keyword id="KW-0489">Methyltransferase</keyword>
<keyword id="KW-1185">Reference proteome</keyword>
<keyword id="KW-0698">rRNA processing</keyword>
<keyword id="KW-0949">S-adenosyl-L-methionine</keyword>
<keyword id="KW-0808">Transferase</keyword>
<evidence type="ECO:0000255" key="1">
    <source>
        <dbReference type="HAMAP-Rule" id="MF_00658"/>
    </source>
</evidence>
<organism>
    <name type="scientific">Lactobacillus acidophilus (strain ATCC 700396 / NCK56 / N2 / NCFM)</name>
    <dbReference type="NCBI Taxonomy" id="272621"/>
    <lineage>
        <taxon>Bacteria</taxon>
        <taxon>Bacillati</taxon>
        <taxon>Bacillota</taxon>
        <taxon>Bacilli</taxon>
        <taxon>Lactobacillales</taxon>
        <taxon>Lactobacillaceae</taxon>
        <taxon>Lactobacillus</taxon>
    </lineage>
</organism>
<accession>Q5FMT8</accession>
<proteinExistence type="inferred from homology"/>
<comment type="function">
    <text evidence="1">Specifically methylates the pseudouridine at position 1915 (m3Psi1915) in 23S rRNA.</text>
</comment>
<comment type="catalytic activity">
    <reaction evidence="1">
        <text>pseudouridine(1915) in 23S rRNA + S-adenosyl-L-methionine = N(3)-methylpseudouridine(1915) in 23S rRNA + S-adenosyl-L-homocysteine + H(+)</text>
        <dbReference type="Rhea" id="RHEA:42752"/>
        <dbReference type="Rhea" id="RHEA-COMP:10221"/>
        <dbReference type="Rhea" id="RHEA-COMP:10222"/>
        <dbReference type="ChEBI" id="CHEBI:15378"/>
        <dbReference type="ChEBI" id="CHEBI:57856"/>
        <dbReference type="ChEBI" id="CHEBI:59789"/>
        <dbReference type="ChEBI" id="CHEBI:65314"/>
        <dbReference type="ChEBI" id="CHEBI:74486"/>
        <dbReference type="EC" id="2.1.1.177"/>
    </reaction>
</comment>
<comment type="subunit">
    <text evidence="1">Homodimer.</text>
</comment>
<comment type="subcellular location">
    <subcellularLocation>
        <location evidence="1">Cytoplasm</location>
    </subcellularLocation>
</comment>
<comment type="similarity">
    <text evidence="1">Belongs to the RNA methyltransferase RlmH family.</text>
</comment>
<reference key="1">
    <citation type="journal article" date="2005" name="Proc. Natl. Acad. Sci. U.S.A.">
        <title>Complete genome sequence of the probiotic lactic acid bacterium Lactobacillus acidophilus NCFM.</title>
        <authorList>
            <person name="Altermann E."/>
            <person name="Russell W.M."/>
            <person name="Azcarate-Peril M.A."/>
            <person name="Barrangou R."/>
            <person name="Buck B.L."/>
            <person name="McAuliffe O."/>
            <person name="Souther N."/>
            <person name="Dobson A."/>
            <person name="Duong T."/>
            <person name="Callanan M."/>
            <person name="Lick S."/>
            <person name="Hamrick A."/>
            <person name="Cano R."/>
            <person name="Klaenhammer T.R."/>
        </authorList>
    </citation>
    <scope>NUCLEOTIDE SEQUENCE [LARGE SCALE GENOMIC DNA]</scope>
    <source>
        <strain>ATCC 700396 / NCK56 / N2 / NCFM</strain>
    </source>
</reference>
<protein>
    <recommendedName>
        <fullName evidence="1">Ribosomal RNA large subunit methyltransferase H</fullName>
        <ecNumber evidence="1">2.1.1.177</ecNumber>
    </recommendedName>
    <alternativeName>
        <fullName evidence="1">23S rRNA (pseudouridine1915-N3)-methyltransferase</fullName>
    </alternativeName>
    <alternativeName>
        <fullName evidence="1">23S rRNA m3Psi1915 methyltransferase</fullName>
    </alternativeName>
    <alternativeName>
        <fullName evidence="1">rRNA (pseudouridine-N3-)-methyltransferase RlmH</fullName>
    </alternativeName>
</protein>
<gene>
    <name evidence="1" type="primary">rlmH</name>
    <name type="ordered locus">LBA0084</name>
</gene>
<name>RLMH_LACAC</name>